<reference key="1">
    <citation type="journal article" date="2007" name="PLoS ONE">
        <title>The complete genome sequence and analysis of the Epsilonproteobacterium Arcobacter butzleri.</title>
        <authorList>
            <person name="Miller W.G."/>
            <person name="Parker C.T."/>
            <person name="Rubenfield M."/>
            <person name="Mendz G.L."/>
            <person name="Woesten M.M.S.M."/>
            <person name="Ussery D.W."/>
            <person name="Stolz J.F."/>
            <person name="Binnewies T.T."/>
            <person name="Hallin P.F."/>
            <person name="Wang G."/>
            <person name="Malek J.A."/>
            <person name="Rogosin A."/>
            <person name="Stanker L.H."/>
            <person name="Mandrell R.E."/>
        </authorList>
    </citation>
    <scope>NUCLEOTIDE SEQUENCE [LARGE SCALE GENOMIC DNA]</scope>
    <source>
        <strain>RM4018</strain>
    </source>
</reference>
<name>NHAA1_ALIB4</name>
<proteinExistence type="inferred from homology"/>
<dbReference type="EMBL" id="CP000361">
    <property type="protein sequence ID" value="ABV67629.1"/>
    <property type="molecule type" value="Genomic_DNA"/>
</dbReference>
<dbReference type="SMR" id="A8EUK5"/>
<dbReference type="STRING" id="367737.Abu_1374"/>
<dbReference type="GeneID" id="24304513"/>
<dbReference type="KEGG" id="abu:Abu_1374"/>
<dbReference type="eggNOG" id="COG3004">
    <property type="taxonomic scope" value="Bacteria"/>
</dbReference>
<dbReference type="HOGENOM" id="CLU_015803_1_2_7"/>
<dbReference type="Proteomes" id="UP000001136">
    <property type="component" value="Chromosome"/>
</dbReference>
<dbReference type="GO" id="GO:0005886">
    <property type="term" value="C:plasma membrane"/>
    <property type="evidence" value="ECO:0007669"/>
    <property type="project" value="UniProtKB-SubCell"/>
</dbReference>
<dbReference type="GO" id="GO:0015385">
    <property type="term" value="F:sodium:proton antiporter activity"/>
    <property type="evidence" value="ECO:0007669"/>
    <property type="project" value="TreeGrafter"/>
</dbReference>
<dbReference type="GO" id="GO:0006885">
    <property type="term" value="P:regulation of pH"/>
    <property type="evidence" value="ECO:0007669"/>
    <property type="project" value="InterPro"/>
</dbReference>
<dbReference type="Gene3D" id="1.20.1530.10">
    <property type="entry name" value="Na+/H+ antiporter like domain"/>
    <property type="match status" value="1"/>
</dbReference>
<dbReference type="HAMAP" id="MF_01844">
    <property type="entry name" value="NhaA"/>
    <property type="match status" value="1"/>
</dbReference>
<dbReference type="InterPro" id="IPR023171">
    <property type="entry name" value="Na/H_antiporter_dom_sf"/>
</dbReference>
<dbReference type="InterPro" id="IPR004670">
    <property type="entry name" value="NhaA"/>
</dbReference>
<dbReference type="NCBIfam" id="TIGR00773">
    <property type="entry name" value="NhaA"/>
    <property type="match status" value="1"/>
</dbReference>
<dbReference type="PANTHER" id="PTHR30341:SF0">
    <property type="entry name" value="NA(+)_H(+) ANTIPORTER NHAA"/>
    <property type="match status" value="1"/>
</dbReference>
<dbReference type="PANTHER" id="PTHR30341">
    <property type="entry name" value="SODIUM ION/PROTON ANTIPORTER NHAA-RELATED"/>
    <property type="match status" value="1"/>
</dbReference>
<dbReference type="Pfam" id="PF06965">
    <property type="entry name" value="Na_H_antiport_1"/>
    <property type="match status" value="1"/>
</dbReference>
<feature type="chain" id="PRO_0000334226" description="Na(+)/H(+) antiporter NhaA 1">
    <location>
        <begin position="1"/>
        <end position="431"/>
    </location>
</feature>
<feature type="transmembrane region" description="Helical" evidence="1">
    <location>
        <begin position="17"/>
        <end position="37"/>
    </location>
</feature>
<feature type="transmembrane region" description="Helical" evidence="1">
    <location>
        <begin position="56"/>
        <end position="76"/>
    </location>
</feature>
<feature type="transmembrane region" description="Helical" evidence="1">
    <location>
        <begin position="98"/>
        <end position="118"/>
    </location>
</feature>
<feature type="transmembrane region" description="Helical" evidence="1">
    <location>
        <begin position="123"/>
        <end position="143"/>
    </location>
</feature>
<feature type="transmembrane region" description="Helical" evidence="1">
    <location>
        <begin position="154"/>
        <end position="174"/>
    </location>
</feature>
<feature type="transmembrane region" description="Helical" evidence="1">
    <location>
        <begin position="182"/>
        <end position="202"/>
    </location>
</feature>
<feature type="transmembrane region" description="Helical" evidence="1">
    <location>
        <begin position="209"/>
        <end position="229"/>
    </location>
</feature>
<feature type="transmembrane region" description="Helical" evidence="1">
    <location>
        <begin position="301"/>
        <end position="321"/>
    </location>
</feature>
<feature type="transmembrane region" description="Helical" evidence="1">
    <location>
        <begin position="329"/>
        <end position="349"/>
    </location>
</feature>
<feature type="transmembrane region" description="Helical" evidence="1">
    <location>
        <begin position="373"/>
        <end position="393"/>
    </location>
</feature>
<feature type="transmembrane region" description="Helical" evidence="1">
    <location>
        <begin position="400"/>
        <end position="420"/>
    </location>
</feature>
<protein>
    <recommendedName>
        <fullName evidence="1">Na(+)/H(+) antiporter NhaA 1</fullName>
    </recommendedName>
    <alternativeName>
        <fullName evidence="1">Sodium/proton antiporter NhaA 1</fullName>
    </alternativeName>
</protein>
<keyword id="KW-0050">Antiport</keyword>
<keyword id="KW-0997">Cell inner membrane</keyword>
<keyword id="KW-1003">Cell membrane</keyword>
<keyword id="KW-0406">Ion transport</keyword>
<keyword id="KW-0472">Membrane</keyword>
<keyword id="KW-1185">Reference proteome</keyword>
<keyword id="KW-0915">Sodium</keyword>
<keyword id="KW-0739">Sodium transport</keyword>
<keyword id="KW-0812">Transmembrane</keyword>
<keyword id="KW-1133">Transmembrane helix</keyword>
<keyword id="KW-0813">Transport</keyword>
<organism>
    <name type="scientific">Aliarcobacter butzleri (strain RM4018)</name>
    <name type="common">Arcobacter butzleri</name>
    <dbReference type="NCBI Taxonomy" id="367737"/>
    <lineage>
        <taxon>Bacteria</taxon>
        <taxon>Pseudomonadati</taxon>
        <taxon>Campylobacterota</taxon>
        <taxon>Epsilonproteobacteria</taxon>
        <taxon>Campylobacterales</taxon>
        <taxon>Arcobacteraceae</taxon>
        <taxon>Aliarcobacter</taxon>
    </lineage>
</organism>
<accession>A8EUK5</accession>
<comment type="function">
    <text evidence="1">Na(+)/H(+) antiporter that extrudes sodium in exchange for external protons.</text>
</comment>
<comment type="catalytic activity">
    <reaction evidence="1">
        <text>Na(+)(in) + 2 H(+)(out) = Na(+)(out) + 2 H(+)(in)</text>
        <dbReference type="Rhea" id="RHEA:29251"/>
        <dbReference type="ChEBI" id="CHEBI:15378"/>
        <dbReference type="ChEBI" id="CHEBI:29101"/>
    </reaction>
    <physiologicalReaction direction="left-to-right" evidence="1">
        <dbReference type="Rhea" id="RHEA:29252"/>
    </physiologicalReaction>
</comment>
<comment type="subcellular location">
    <subcellularLocation>
        <location evidence="1">Cell inner membrane</location>
        <topology evidence="1">Multi-pass membrane protein</topology>
    </subcellularLocation>
</comment>
<comment type="similarity">
    <text evidence="1">Belongs to the NhaA Na(+)/H(+) (TC 2.A.33) antiporter family.</text>
</comment>
<gene>
    <name evidence="1" type="primary">nhaA1</name>
    <name type="ordered locus">Abu_1374</name>
</gene>
<sequence>MVKKYKVIDNFISKEALSGILLLFVTLFAIIVANSNFGDFYFNLWDKPLGVAIGDFIISMPLRLWINDGLMALFFLMVSLEIKRELLIGELASVSRAMFPFVASLGGMIVPASIYIALNPDNFIGFGIPMGTDTAFAIAMLILLGKRVNTALKLFLVALAVIDDLGAIIVVATVYTSELKLEYFLHAAFVYGLIWLLNYFDVKKLSFYLFLGIFLWIFIHETGVHATIAGVLLAFAIPISSRMNEKKFIEKTKADLEEFERCMDDKPILNHRQINALEGIAYGYDRVQNPLIRLEHDLHGFSAFFIMPIFAFSNAGVLLDFSTVWTNWMIVLGVALGLLVGKPLGIFGFTYAATKLNIIKKPKNISWFEIISVGFIAGIGFTMSIFIANLAFIDEDTISAIKIGIFTASFMATVIGMILISINYKFKISKA</sequence>
<evidence type="ECO:0000255" key="1">
    <source>
        <dbReference type="HAMAP-Rule" id="MF_01844"/>
    </source>
</evidence>